<sequence>MALNLEQKKAMVAEITDIANQAVSAVAADYRGLTVSEMSDLRKSAREARVHMRVYRNTLARRAFKETTYACLEEVLTGPIVLFFSQEEPGAAARLIEKFIKEHERLEVKGLALGGELLPAEKLKAVARLPSREEALSQLAAVLLAPVTKLVRTLNEPIAQVARVMAAVRDQKAA</sequence>
<protein>
    <recommendedName>
        <fullName evidence="1">Large ribosomal subunit protein uL10</fullName>
    </recommendedName>
    <alternativeName>
        <fullName evidence="2">50S ribosomal protein L10</fullName>
    </alternativeName>
</protein>
<dbReference type="EMBL" id="CP001019">
    <property type="protein sequence ID" value="ACJ19051.1"/>
    <property type="molecule type" value="Genomic_DNA"/>
</dbReference>
<dbReference type="RefSeq" id="WP_005771616.1">
    <property type="nucleotide sequence ID" value="NC_011527.1"/>
</dbReference>
<dbReference type="SMR" id="B6J273"/>
<dbReference type="KEGG" id="cbg:CbuG_1777"/>
<dbReference type="HOGENOM" id="CLU_092227_0_1_6"/>
<dbReference type="GO" id="GO:0015934">
    <property type="term" value="C:large ribosomal subunit"/>
    <property type="evidence" value="ECO:0007669"/>
    <property type="project" value="InterPro"/>
</dbReference>
<dbReference type="GO" id="GO:0070180">
    <property type="term" value="F:large ribosomal subunit rRNA binding"/>
    <property type="evidence" value="ECO:0007669"/>
    <property type="project" value="UniProtKB-UniRule"/>
</dbReference>
<dbReference type="GO" id="GO:0003735">
    <property type="term" value="F:structural constituent of ribosome"/>
    <property type="evidence" value="ECO:0007669"/>
    <property type="project" value="InterPro"/>
</dbReference>
<dbReference type="GO" id="GO:0006412">
    <property type="term" value="P:translation"/>
    <property type="evidence" value="ECO:0007669"/>
    <property type="project" value="UniProtKB-UniRule"/>
</dbReference>
<dbReference type="CDD" id="cd05797">
    <property type="entry name" value="Ribosomal_L10"/>
    <property type="match status" value="1"/>
</dbReference>
<dbReference type="Gene3D" id="3.30.70.1730">
    <property type="match status" value="1"/>
</dbReference>
<dbReference type="Gene3D" id="6.10.250.290">
    <property type="match status" value="1"/>
</dbReference>
<dbReference type="HAMAP" id="MF_00362">
    <property type="entry name" value="Ribosomal_uL10"/>
    <property type="match status" value="1"/>
</dbReference>
<dbReference type="InterPro" id="IPR001790">
    <property type="entry name" value="Ribosomal_uL10"/>
</dbReference>
<dbReference type="InterPro" id="IPR043141">
    <property type="entry name" value="Ribosomal_uL10-like_sf"/>
</dbReference>
<dbReference type="InterPro" id="IPR022973">
    <property type="entry name" value="Ribosomal_uL10_bac"/>
</dbReference>
<dbReference type="InterPro" id="IPR047865">
    <property type="entry name" value="Ribosomal_uL10_bac_type"/>
</dbReference>
<dbReference type="InterPro" id="IPR002363">
    <property type="entry name" value="Ribosomal_uL10_CS_bac"/>
</dbReference>
<dbReference type="NCBIfam" id="NF000955">
    <property type="entry name" value="PRK00099.1-1"/>
    <property type="match status" value="1"/>
</dbReference>
<dbReference type="PANTHER" id="PTHR11560">
    <property type="entry name" value="39S RIBOSOMAL PROTEIN L10, MITOCHONDRIAL"/>
    <property type="match status" value="1"/>
</dbReference>
<dbReference type="Pfam" id="PF00466">
    <property type="entry name" value="Ribosomal_L10"/>
    <property type="match status" value="1"/>
</dbReference>
<dbReference type="SUPFAM" id="SSF160369">
    <property type="entry name" value="Ribosomal protein L10-like"/>
    <property type="match status" value="1"/>
</dbReference>
<dbReference type="PROSITE" id="PS01109">
    <property type="entry name" value="RIBOSOMAL_L10"/>
    <property type="match status" value="1"/>
</dbReference>
<evidence type="ECO:0000255" key="1">
    <source>
        <dbReference type="HAMAP-Rule" id="MF_00362"/>
    </source>
</evidence>
<evidence type="ECO:0000305" key="2"/>
<accession>B6J273</accession>
<comment type="function">
    <text evidence="1">Forms part of the ribosomal stalk, playing a central role in the interaction of the ribosome with GTP-bound translation factors.</text>
</comment>
<comment type="subunit">
    <text evidence="1">Part of the ribosomal stalk of the 50S ribosomal subunit. The N-terminus interacts with L11 and the large rRNA to form the base of the stalk. The C-terminus forms an elongated spine to which L12 dimers bind in a sequential fashion forming a multimeric L10(L12)X complex.</text>
</comment>
<comment type="similarity">
    <text evidence="1">Belongs to the universal ribosomal protein uL10 family.</text>
</comment>
<organism>
    <name type="scientific">Coxiella burnetii (strain CbuG_Q212)</name>
    <name type="common">Coxiella burnetii (strain Q212)</name>
    <dbReference type="NCBI Taxonomy" id="434923"/>
    <lineage>
        <taxon>Bacteria</taxon>
        <taxon>Pseudomonadati</taxon>
        <taxon>Pseudomonadota</taxon>
        <taxon>Gammaproteobacteria</taxon>
        <taxon>Legionellales</taxon>
        <taxon>Coxiellaceae</taxon>
        <taxon>Coxiella</taxon>
    </lineage>
</organism>
<feature type="chain" id="PRO_1000120942" description="Large ribosomal subunit protein uL10">
    <location>
        <begin position="1"/>
        <end position="174"/>
    </location>
</feature>
<gene>
    <name evidence="1" type="primary">rplJ</name>
    <name type="ordered locus">CbuG_1777</name>
</gene>
<keyword id="KW-0687">Ribonucleoprotein</keyword>
<keyword id="KW-0689">Ribosomal protein</keyword>
<keyword id="KW-0694">RNA-binding</keyword>
<keyword id="KW-0699">rRNA-binding</keyword>
<name>RL10_COXB2</name>
<reference key="1">
    <citation type="journal article" date="2009" name="Infect. Immun.">
        <title>Comparative genomics reveal extensive transposon-mediated genomic plasticity and diversity among potential effector proteins within the genus Coxiella.</title>
        <authorList>
            <person name="Beare P.A."/>
            <person name="Unsworth N."/>
            <person name="Andoh M."/>
            <person name="Voth D.E."/>
            <person name="Omsland A."/>
            <person name="Gilk S.D."/>
            <person name="Williams K.P."/>
            <person name="Sobral B.W."/>
            <person name="Kupko J.J. III"/>
            <person name="Porcella S.F."/>
            <person name="Samuel J.E."/>
            <person name="Heinzen R.A."/>
        </authorList>
    </citation>
    <scope>NUCLEOTIDE SEQUENCE [LARGE SCALE GENOMIC DNA]</scope>
    <source>
        <strain>CbuG_Q212</strain>
    </source>
</reference>
<proteinExistence type="inferred from homology"/>